<reference key="1">
    <citation type="journal article" date="2013" name="Nature">
        <title>The zebrafish reference genome sequence and its relationship to the human genome.</title>
        <authorList>
            <person name="Howe K."/>
            <person name="Clark M.D."/>
            <person name="Torroja C.F."/>
            <person name="Torrance J."/>
            <person name="Berthelot C."/>
            <person name="Muffato M."/>
            <person name="Collins J.E."/>
            <person name="Humphray S."/>
            <person name="McLaren K."/>
            <person name="Matthews L."/>
            <person name="McLaren S."/>
            <person name="Sealy I."/>
            <person name="Caccamo M."/>
            <person name="Churcher C."/>
            <person name="Scott C."/>
            <person name="Barrett J.C."/>
            <person name="Koch R."/>
            <person name="Rauch G.J."/>
            <person name="White S."/>
            <person name="Chow W."/>
            <person name="Kilian B."/>
            <person name="Quintais L.T."/>
            <person name="Guerra-Assuncao J.A."/>
            <person name="Zhou Y."/>
            <person name="Gu Y."/>
            <person name="Yen J."/>
            <person name="Vogel J.H."/>
            <person name="Eyre T."/>
            <person name="Redmond S."/>
            <person name="Banerjee R."/>
            <person name="Chi J."/>
            <person name="Fu B."/>
            <person name="Langley E."/>
            <person name="Maguire S.F."/>
            <person name="Laird G.K."/>
            <person name="Lloyd D."/>
            <person name="Kenyon E."/>
            <person name="Donaldson S."/>
            <person name="Sehra H."/>
            <person name="Almeida-King J."/>
            <person name="Loveland J."/>
            <person name="Trevanion S."/>
            <person name="Jones M."/>
            <person name="Quail M."/>
            <person name="Willey D."/>
            <person name="Hunt A."/>
            <person name="Burton J."/>
            <person name="Sims S."/>
            <person name="McLay K."/>
            <person name="Plumb B."/>
            <person name="Davis J."/>
            <person name="Clee C."/>
            <person name="Oliver K."/>
            <person name="Clark R."/>
            <person name="Riddle C."/>
            <person name="Elliot D."/>
            <person name="Threadgold G."/>
            <person name="Harden G."/>
            <person name="Ware D."/>
            <person name="Begum S."/>
            <person name="Mortimore B."/>
            <person name="Kerry G."/>
            <person name="Heath P."/>
            <person name="Phillimore B."/>
            <person name="Tracey A."/>
            <person name="Corby N."/>
            <person name="Dunn M."/>
            <person name="Johnson C."/>
            <person name="Wood J."/>
            <person name="Clark S."/>
            <person name="Pelan S."/>
            <person name="Griffiths G."/>
            <person name="Smith M."/>
            <person name="Glithero R."/>
            <person name="Howden P."/>
            <person name="Barker N."/>
            <person name="Lloyd C."/>
            <person name="Stevens C."/>
            <person name="Harley J."/>
            <person name="Holt K."/>
            <person name="Panagiotidis G."/>
            <person name="Lovell J."/>
            <person name="Beasley H."/>
            <person name="Henderson C."/>
            <person name="Gordon D."/>
            <person name="Auger K."/>
            <person name="Wright D."/>
            <person name="Collins J."/>
            <person name="Raisen C."/>
            <person name="Dyer L."/>
            <person name="Leung K."/>
            <person name="Robertson L."/>
            <person name="Ambridge K."/>
            <person name="Leongamornlert D."/>
            <person name="McGuire S."/>
            <person name="Gilderthorp R."/>
            <person name="Griffiths C."/>
            <person name="Manthravadi D."/>
            <person name="Nichol S."/>
            <person name="Barker G."/>
            <person name="Whitehead S."/>
            <person name="Kay M."/>
            <person name="Brown J."/>
            <person name="Murnane C."/>
            <person name="Gray E."/>
            <person name="Humphries M."/>
            <person name="Sycamore N."/>
            <person name="Barker D."/>
            <person name="Saunders D."/>
            <person name="Wallis J."/>
            <person name="Babbage A."/>
            <person name="Hammond S."/>
            <person name="Mashreghi-Mohammadi M."/>
            <person name="Barr L."/>
            <person name="Martin S."/>
            <person name="Wray P."/>
            <person name="Ellington A."/>
            <person name="Matthews N."/>
            <person name="Ellwood M."/>
            <person name="Woodmansey R."/>
            <person name="Clark G."/>
            <person name="Cooper J."/>
            <person name="Tromans A."/>
            <person name="Grafham D."/>
            <person name="Skuce C."/>
            <person name="Pandian R."/>
            <person name="Andrews R."/>
            <person name="Harrison E."/>
            <person name="Kimberley A."/>
            <person name="Garnett J."/>
            <person name="Fosker N."/>
            <person name="Hall R."/>
            <person name="Garner P."/>
            <person name="Kelly D."/>
            <person name="Bird C."/>
            <person name="Palmer S."/>
            <person name="Gehring I."/>
            <person name="Berger A."/>
            <person name="Dooley C.M."/>
            <person name="Ersan-Urun Z."/>
            <person name="Eser C."/>
            <person name="Geiger H."/>
            <person name="Geisler M."/>
            <person name="Karotki L."/>
            <person name="Kirn A."/>
            <person name="Konantz J."/>
            <person name="Konantz M."/>
            <person name="Oberlander M."/>
            <person name="Rudolph-Geiger S."/>
            <person name="Teucke M."/>
            <person name="Lanz C."/>
            <person name="Raddatz G."/>
            <person name="Osoegawa K."/>
            <person name="Zhu B."/>
            <person name="Rapp A."/>
            <person name="Widaa S."/>
            <person name="Langford C."/>
            <person name="Yang F."/>
            <person name="Schuster S.C."/>
            <person name="Carter N.P."/>
            <person name="Harrow J."/>
            <person name="Ning Z."/>
            <person name="Herrero J."/>
            <person name="Searle S.M."/>
            <person name="Enright A."/>
            <person name="Geisler R."/>
            <person name="Plasterk R.H."/>
            <person name="Lee C."/>
            <person name="Westerfield M."/>
            <person name="de Jong P.J."/>
            <person name="Zon L.I."/>
            <person name="Postlethwait J.H."/>
            <person name="Nusslein-Volhard C."/>
            <person name="Hubbard T.J."/>
            <person name="Roest Crollius H."/>
            <person name="Rogers J."/>
            <person name="Stemple D.L."/>
        </authorList>
    </citation>
    <scope>NUCLEOTIDE SEQUENCE [LARGE SCALE GENOMIC DNA]</scope>
    <source>
        <strain>Tuebingen</strain>
    </source>
</reference>
<proteinExistence type="inferred from homology"/>
<evidence type="ECO:0000250" key="1"/>
<evidence type="ECO:0000250" key="2">
    <source>
        <dbReference type="UniProtKB" id="O60260"/>
    </source>
</evidence>
<evidence type="ECO:0000255" key="3"/>
<evidence type="ECO:0000255" key="4">
    <source>
        <dbReference type="PROSITE-ProRule" id="PRU01221"/>
    </source>
</evidence>
<evidence type="ECO:0000305" key="5"/>
<sequence length="293" mass="33130">MTTARYRPTWDLALDPLVSCKLCLGEFPLEQMTTITQCQCVFCTMCLKQYVELLIKEGFETAISCPDSACPKRGHLQENEIECMVATEIMQRYRKLQFEKEVLLDPSRTWCPSSTCQAVCQLKESDTVLPQLVRCSVCTLEFCSACKASWHPDQDCQENVPITSFLPGESSSFFKADDDDAPIKRCPKCKVYIERDEGCAQMMCKNCKHAFCWYCLESLDDDFLLIHYDKGPCRNKLGHSRASVIWHRTQVVGIFAGFGLLLLVASPFLLLATPFVLCCKCKCSKGDDDPLPT</sequence>
<organism>
    <name type="scientific">Danio rerio</name>
    <name type="common">Zebrafish</name>
    <name type="synonym">Brachydanio rerio</name>
    <dbReference type="NCBI Taxonomy" id="7955"/>
    <lineage>
        <taxon>Eukaryota</taxon>
        <taxon>Metazoa</taxon>
        <taxon>Chordata</taxon>
        <taxon>Craniata</taxon>
        <taxon>Vertebrata</taxon>
        <taxon>Euteleostomi</taxon>
        <taxon>Actinopterygii</taxon>
        <taxon>Neopterygii</taxon>
        <taxon>Teleostei</taxon>
        <taxon>Ostariophysi</taxon>
        <taxon>Cypriniformes</taxon>
        <taxon>Danionidae</taxon>
        <taxon>Danioninae</taxon>
        <taxon>Danio</taxon>
    </lineage>
</organism>
<keyword id="KW-0472">Membrane</keyword>
<keyword id="KW-0479">Metal-binding</keyword>
<keyword id="KW-1185">Reference proteome</keyword>
<keyword id="KW-0677">Repeat</keyword>
<keyword id="KW-0808">Transferase</keyword>
<keyword id="KW-0812">Transmembrane</keyword>
<keyword id="KW-1133">Transmembrane helix</keyword>
<keyword id="KW-0833">Ubl conjugation pathway</keyword>
<keyword id="KW-0862">Zinc</keyword>
<keyword id="KW-0863">Zinc-finger</keyword>
<name>R1441_DANRE</name>
<feature type="chain" id="PRO_0000307191" description="Probable E3 ubiquitin-protein ligase RNF144A-A">
    <location>
        <begin position="1"/>
        <end position="293"/>
    </location>
</feature>
<feature type="transmembrane region" description="Helical" evidence="3">
    <location>
        <begin position="251"/>
        <end position="271"/>
    </location>
</feature>
<feature type="zinc finger region" description="RING-type 1" evidence="4">
    <location>
        <begin position="20"/>
        <end position="70"/>
    </location>
</feature>
<feature type="zinc finger region" description="IBR-type" evidence="4">
    <location>
        <begin position="91"/>
        <end position="156"/>
    </location>
</feature>
<feature type="zinc finger region" description="RING-type 2; atypical" evidence="4">
    <location>
        <begin position="186"/>
        <end position="215"/>
    </location>
</feature>
<feature type="region of interest" description="TRIAD supradomain" evidence="4">
    <location>
        <begin position="16"/>
        <end position="237"/>
    </location>
</feature>
<feature type="active site" evidence="4">
    <location>
        <position position="199"/>
    </location>
</feature>
<feature type="binding site" evidence="4">
    <location>
        <position position="20"/>
    </location>
    <ligand>
        <name>Zn(2+)</name>
        <dbReference type="ChEBI" id="CHEBI:29105"/>
        <label>1</label>
    </ligand>
</feature>
<feature type="binding site" evidence="4">
    <location>
        <position position="23"/>
    </location>
    <ligand>
        <name>Zn(2+)</name>
        <dbReference type="ChEBI" id="CHEBI:29105"/>
        <label>1</label>
    </ligand>
</feature>
<feature type="binding site" evidence="4">
    <location>
        <position position="43"/>
    </location>
    <ligand>
        <name>Zn(2+)</name>
        <dbReference type="ChEBI" id="CHEBI:29105"/>
        <label>1</label>
    </ligand>
</feature>
<feature type="binding site" evidence="4">
    <location>
        <position position="46"/>
    </location>
    <ligand>
        <name>Zn(2+)</name>
        <dbReference type="ChEBI" id="CHEBI:29105"/>
        <label>1</label>
    </ligand>
</feature>
<feature type="binding site" evidence="4">
    <location>
        <position position="111"/>
    </location>
    <ligand>
        <name>Zn(2+)</name>
        <dbReference type="ChEBI" id="CHEBI:29105"/>
        <label>2</label>
    </ligand>
</feature>
<feature type="binding site" evidence="4">
    <location>
        <position position="116"/>
    </location>
    <ligand>
        <name>Zn(2+)</name>
        <dbReference type="ChEBI" id="CHEBI:29105"/>
        <label>2</label>
    </ligand>
</feature>
<feature type="binding site" evidence="4">
    <location>
        <position position="135"/>
    </location>
    <ligand>
        <name>Zn(2+)</name>
        <dbReference type="ChEBI" id="CHEBI:29105"/>
        <label>2</label>
    </ligand>
</feature>
<feature type="binding site" evidence="4">
    <location>
        <position position="138"/>
    </location>
    <ligand>
        <name>Zn(2+)</name>
        <dbReference type="ChEBI" id="CHEBI:29105"/>
        <label>2</label>
    </ligand>
</feature>
<feature type="binding site" evidence="4">
    <location>
        <position position="143"/>
    </location>
    <ligand>
        <name>Zn(2+)</name>
        <dbReference type="ChEBI" id="CHEBI:29105"/>
        <label>3</label>
    </ligand>
</feature>
<feature type="binding site" evidence="4">
    <location>
        <position position="146"/>
    </location>
    <ligand>
        <name>Zn(2+)</name>
        <dbReference type="ChEBI" id="CHEBI:29105"/>
        <label>3</label>
    </ligand>
</feature>
<feature type="binding site" evidence="4">
    <location>
        <position position="151"/>
    </location>
    <ligand>
        <name>Zn(2+)</name>
        <dbReference type="ChEBI" id="CHEBI:29105"/>
        <label>3</label>
    </ligand>
</feature>
<feature type="binding site" evidence="4">
    <location>
        <position position="156"/>
    </location>
    <ligand>
        <name>Zn(2+)</name>
        <dbReference type="ChEBI" id="CHEBI:29105"/>
        <label>3</label>
    </ligand>
</feature>
<feature type="binding site" evidence="4">
    <location>
        <position position="186"/>
    </location>
    <ligand>
        <name>Zn(2+)</name>
        <dbReference type="ChEBI" id="CHEBI:29105"/>
        <label>4</label>
    </ligand>
</feature>
<feature type="binding site" evidence="4">
    <location>
        <position position="189"/>
    </location>
    <ligand>
        <name>Zn(2+)</name>
        <dbReference type="ChEBI" id="CHEBI:29105"/>
        <label>4</label>
    </ligand>
</feature>
<feature type="binding site" evidence="4">
    <location>
        <position position="204"/>
    </location>
    <ligand>
        <name>Zn(2+)</name>
        <dbReference type="ChEBI" id="CHEBI:29105"/>
        <label>4</label>
    </ligand>
</feature>
<feature type="binding site" evidence="4">
    <location>
        <position position="207"/>
    </location>
    <ligand>
        <name>Zn(2+)</name>
        <dbReference type="ChEBI" id="CHEBI:29105"/>
        <label>4</label>
    </ligand>
</feature>
<feature type="binding site" evidence="4">
    <location>
        <position position="212"/>
    </location>
    <ligand>
        <name>Zn(2+)</name>
        <dbReference type="ChEBI" id="CHEBI:29105"/>
        <label>5</label>
    </ligand>
</feature>
<feature type="binding site" evidence="4">
    <location>
        <position position="215"/>
    </location>
    <ligand>
        <name>Zn(2+)</name>
        <dbReference type="ChEBI" id="CHEBI:29105"/>
        <label>5</label>
    </ligand>
</feature>
<feature type="binding site" evidence="4">
    <location>
        <position position="227"/>
    </location>
    <ligand>
        <name>Zn(2+)</name>
        <dbReference type="ChEBI" id="CHEBI:29105"/>
        <label>5</label>
    </ligand>
</feature>
<feature type="binding site" evidence="4">
    <location>
        <position position="233"/>
    </location>
    <ligand>
        <name>Zn(2+)</name>
        <dbReference type="ChEBI" id="CHEBI:29105"/>
        <label>5</label>
    </ligand>
</feature>
<protein>
    <recommendedName>
        <fullName>Probable E3 ubiquitin-protein ligase RNF144A-A</fullName>
        <ecNumber evidence="2">2.3.2.31</ecNumber>
    </recommendedName>
    <alternativeName>
        <fullName>RING finger protein 144A-A</fullName>
    </alternativeName>
</protein>
<comment type="function">
    <text evidence="1">E3 ubiquitin-protein ligase which accepts ubiquitin from E2 ubiquitin-conjugating enzymes ube2l3 and ube2l6 in the form of a thioester and then directly transfers the ubiquitin to targeted substrates.</text>
</comment>
<comment type="catalytic activity">
    <reaction evidence="2">
        <text>[E2 ubiquitin-conjugating enzyme]-S-ubiquitinyl-L-cysteine + [acceptor protein]-L-lysine = [E2 ubiquitin-conjugating enzyme]-L-cysteine + [acceptor protein]-N(6)-ubiquitinyl-L-lysine.</text>
        <dbReference type="EC" id="2.3.2.31"/>
    </reaction>
</comment>
<comment type="pathway">
    <text>Protein modification; protein ubiquitination.</text>
</comment>
<comment type="subcellular location">
    <subcellularLocation>
        <location evidence="5">Membrane</location>
        <topology evidence="5">Single-pass membrane protein</topology>
    </subcellularLocation>
</comment>
<comment type="domain">
    <text evidence="2">Members of the RBR family are atypical E3 ligases. They interact with the E2 conjugating enzyme UBE2L3 and function like HECT-type E3 enzymes: they bind E2s via the first RING domain, but require an obligate trans-thiolation step during the ubiquitin transfer, requiring a conserved cysteine residue in the second RING domain.</text>
</comment>
<comment type="similarity">
    <text evidence="5">Belongs to the RBR family. RNF144 subfamily.</text>
</comment>
<comment type="caution">
    <text evidence="5">Lacks the His residue in the RING-type domain 2 that is one of the conserved features of the family.</text>
</comment>
<accession>Q5RFV4</accession>
<dbReference type="EC" id="2.3.2.31" evidence="2"/>
<dbReference type="EMBL" id="BX571665">
    <property type="protein sequence ID" value="CAI11966.1"/>
    <property type="molecule type" value="Genomic_DNA"/>
</dbReference>
<dbReference type="EMBL" id="CR556709">
    <property type="protein sequence ID" value="CAI11966.1"/>
    <property type="status" value="JOINED"/>
    <property type="molecule type" value="Genomic_DNA"/>
</dbReference>
<dbReference type="EMBL" id="CR556709">
    <property type="protein sequence ID" value="CAI20730.1"/>
    <property type="molecule type" value="Genomic_DNA"/>
</dbReference>
<dbReference type="EMBL" id="BX571665">
    <property type="protein sequence ID" value="CAI20730.1"/>
    <property type="status" value="JOINED"/>
    <property type="molecule type" value="Genomic_DNA"/>
</dbReference>
<dbReference type="RefSeq" id="NP_001038674.1">
    <property type="nucleotide sequence ID" value="NM_001045209.2"/>
</dbReference>
<dbReference type="RefSeq" id="XP_005158793.1">
    <property type="nucleotide sequence ID" value="XM_005158736.5"/>
</dbReference>
<dbReference type="SMR" id="Q5RFV4"/>
<dbReference type="FunCoup" id="Q5RFV4">
    <property type="interactions" value="209"/>
</dbReference>
<dbReference type="STRING" id="7955.ENSDARP00000017882"/>
<dbReference type="PaxDb" id="7955-ENSDARP00000126396"/>
<dbReference type="Ensembl" id="ENSDART00000016053">
    <property type="protein sequence ID" value="ENSDARP00000017882"/>
    <property type="gene ID" value="ENSDARG00000020600"/>
</dbReference>
<dbReference type="GeneID" id="570968"/>
<dbReference type="KEGG" id="dre:570968"/>
<dbReference type="AGR" id="ZFIN:ZDB-GENE-041001-88"/>
<dbReference type="CTD" id="570968"/>
<dbReference type="ZFIN" id="ZDB-GENE-041001-88">
    <property type="gene designation" value="rnf144aa"/>
</dbReference>
<dbReference type="eggNOG" id="KOG1815">
    <property type="taxonomic scope" value="Eukaryota"/>
</dbReference>
<dbReference type="HOGENOM" id="CLU_053598_1_0_1"/>
<dbReference type="InParanoid" id="Q5RFV4"/>
<dbReference type="OMA" id="CMVAAEM"/>
<dbReference type="OrthoDB" id="10009520at2759"/>
<dbReference type="PhylomeDB" id="Q5RFV4"/>
<dbReference type="TreeFam" id="TF324777"/>
<dbReference type="UniPathway" id="UPA00143"/>
<dbReference type="PRO" id="PR:Q5RFV4"/>
<dbReference type="Proteomes" id="UP000000437">
    <property type="component" value="Chromosome 17"/>
</dbReference>
<dbReference type="Bgee" id="ENSDARG00000020600">
    <property type="expression patterns" value="Expressed in zone of skin and 18 other cell types or tissues"/>
</dbReference>
<dbReference type="GO" id="GO:0005737">
    <property type="term" value="C:cytoplasm"/>
    <property type="evidence" value="ECO:0000318"/>
    <property type="project" value="GO_Central"/>
</dbReference>
<dbReference type="GO" id="GO:0005794">
    <property type="term" value="C:Golgi apparatus"/>
    <property type="evidence" value="ECO:0000318"/>
    <property type="project" value="GO_Central"/>
</dbReference>
<dbReference type="GO" id="GO:0016020">
    <property type="term" value="C:membrane"/>
    <property type="evidence" value="ECO:0007669"/>
    <property type="project" value="UniProtKB-SubCell"/>
</dbReference>
<dbReference type="GO" id="GO:0000151">
    <property type="term" value="C:ubiquitin ligase complex"/>
    <property type="evidence" value="ECO:0000318"/>
    <property type="project" value="GO_Central"/>
</dbReference>
<dbReference type="GO" id="GO:0031624">
    <property type="term" value="F:ubiquitin conjugating enzyme binding"/>
    <property type="evidence" value="ECO:0000318"/>
    <property type="project" value="GO_Central"/>
</dbReference>
<dbReference type="GO" id="GO:0061630">
    <property type="term" value="F:ubiquitin protein ligase activity"/>
    <property type="evidence" value="ECO:0000318"/>
    <property type="project" value="GO_Central"/>
</dbReference>
<dbReference type="GO" id="GO:0008270">
    <property type="term" value="F:zinc ion binding"/>
    <property type="evidence" value="ECO:0007669"/>
    <property type="project" value="UniProtKB-KW"/>
</dbReference>
<dbReference type="GO" id="GO:0016567">
    <property type="term" value="P:protein ubiquitination"/>
    <property type="evidence" value="ECO:0007669"/>
    <property type="project" value="UniProtKB-UniPathway"/>
</dbReference>
<dbReference type="GO" id="GO:0006511">
    <property type="term" value="P:ubiquitin-dependent protein catabolic process"/>
    <property type="evidence" value="ECO:0000318"/>
    <property type="project" value="GO_Central"/>
</dbReference>
<dbReference type="CDD" id="cd20366">
    <property type="entry name" value="BRcat_RBR_RNF144A"/>
    <property type="match status" value="1"/>
</dbReference>
<dbReference type="CDD" id="cd16777">
    <property type="entry name" value="mRING-HC-C4C4_RBR_RNF144A"/>
    <property type="match status" value="1"/>
</dbReference>
<dbReference type="CDD" id="cd20352">
    <property type="entry name" value="Rcat_RBR_RNF144"/>
    <property type="match status" value="1"/>
</dbReference>
<dbReference type="FunFam" id="1.20.120.1750:FF:000006">
    <property type="entry name" value="RBR-type E3 ubiquitin transferase"/>
    <property type="match status" value="1"/>
</dbReference>
<dbReference type="FunFam" id="3.30.40.10:FF:000051">
    <property type="entry name" value="RBR-type E3 ubiquitin transferase"/>
    <property type="match status" value="1"/>
</dbReference>
<dbReference type="Gene3D" id="1.20.120.1750">
    <property type="match status" value="1"/>
</dbReference>
<dbReference type="Gene3D" id="3.30.40.10">
    <property type="entry name" value="Zinc/RING finger domain, C3HC4 (zinc finger)"/>
    <property type="match status" value="1"/>
</dbReference>
<dbReference type="InterPro" id="IPR031127">
    <property type="entry name" value="E3_UB_ligase_RBR"/>
</dbReference>
<dbReference type="InterPro" id="IPR002867">
    <property type="entry name" value="IBR_dom"/>
</dbReference>
<dbReference type="InterPro" id="IPR044066">
    <property type="entry name" value="TRIAD_supradom"/>
</dbReference>
<dbReference type="InterPro" id="IPR001841">
    <property type="entry name" value="Znf_RING"/>
</dbReference>
<dbReference type="InterPro" id="IPR013083">
    <property type="entry name" value="Znf_RING/FYVE/PHD"/>
</dbReference>
<dbReference type="InterPro" id="IPR017907">
    <property type="entry name" value="Znf_RING_CS"/>
</dbReference>
<dbReference type="PANTHER" id="PTHR11685">
    <property type="entry name" value="RBR FAMILY RING FINGER AND IBR DOMAIN-CONTAINING"/>
    <property type="match status" value="1"/>
</dbReference>
<dbReference type="Pfam" id="PF01485">
    <property type="entry name" value="IBR"/>
    <property type="match status" value="1"/>
</dbReference>
<dbReference type="Pfam" id="PF22191">
    <property type="entry name" value="IBR_1"/>
    <property type="match status" value="1"/>
</dbReference>
<dbReference type="SMART" id="SM00647">
    <property type="entry name" value="IBR"/>
    <property type="match status" value="2"/>
</dbReference>
<dbReference type="SUPFAM" id="SSF57850">
    <property type="entry name" value="RING/U-box"/>
    <property type="match status" value="3"/>
</dbReference>
<dbReference type="PROSITE" id="PS51873">
    <property type="entry name" value="TRIAD"/>
    <property type="match status" value="1"/>
</dbReference>
<dbReference type="PROSITE" id="PS00518">
    <property type="entry name" value="ZF_RING_1"/>
    <property type="match status" value="1"/>
</dbReference>
<dbReference type="PROSITE" id="PS50089">
    <property type="entry name" value="ZF_RING_2"/>
    <property type="match status" value="1"/>
</dbReference>
<gene>
    <name type="primary">rnf144aa</name>
    <name type="ORF">si:ch211-276e8.1</name>
</gene>